<proteinExistence type="inferred from homology"/>
<feature type="chain" id="PRO_0000261008" description="Xanthine-guanine phosphoribosyltransferase">
    <location>
        <begin position="1"/>
        <end position="154"/>
    </location>
</feature>
<feature type="binding site" evidence="1">
    <location>
        <begin position="37"/>
        <end position="38"/>
    </location>
    <ligand>
        <name>5-phospho-alpha-D-ribose 1-diphosphate</name>
        <dbReference type="ChEBI" id="CHEBI:58017"/>
    </ligand>
</feature>
<feature type="binding site" evidence="1">
    <location>
        <begin position="90"/>
        <end position="98"/>
    </location>
    <ligand>
        <name>5-phospho-alpha-D-ribose 1-diphosphate</name>
        <dbReference type="ChEBI" id="CHEBI:58017"/>
    </ligand>
</feature>
<feature type="binding site" evidence="1">
    <location>
        <position position="91"/>
    </location>
    <ligand>
        <name>Mg(2+)</name>
        <dbReference type="ChEBI" id="CHEBI:18420"/>
    </ligand>
</feature>
<feature type="binding site" evidence="1">
    <location>
        <begin position="94"/>
        <end position="98"/>
    </location>
    <ligand>
        <name>GMP</name>
        <dbReference type="ChEBI" id="CHEBI:58115"/>
    </ligand>
</feature>
<feature type="binding site" evidence="1">
    <location>
        <position position="94"/>
    </location>
    <ligand>
        <name>guanine</name>
        <dbReference type="ChEBI" id="CHEBI:16235"/>
    </ligand>
</feature>
<feature type="binding site" evidence="1">
    <location>
        <position position="94"/>
    </location>
    <ligand>
        <name>xanthine</name>
        <dbReference type="ChEBI" id="CHEBI:17712"/>
    </ligand>
</feature>
<feature type="binding site" evidence="1">
    <location>
        <begin position="136"/>
        <end position="137"/>
    </location>
    <ligand>
        <name>GMP</name>
        <dbReference type="ChEBI" id="CHEBI:58115"/>
    </ligand>
</feature>
<feature type="binding site" evidence="1">
    <location>
        <position position="137"/>
    </location>
    <ligand>
        <name>guanine</name>
        <dbReference type="ChEBI" id="CHEBI:16235"/>
    </ligand>
</feature>
<feature type="binding site" evidence="1">
    <location>
        <position position="137"/>
    </location>
    <ligand>
        <name>xanthine</name>
        <dbReference type="ChEBI" id="CHEBI:17712"/>
    </ligand>
</feature>
<comment type="function">
    <text evidence="1">Purine salvage pathway enzyme that catalyzes the transfer of the ribosyl-5-phosphate group from 5-phospho-alpha-D-ribose 1-diphosphate (PRPP) to the N9 position of the 6-oxopurines guanine and xanthine to form the corresponding ribonucleotides GMP (guanosine 5'-monophosphate) and XMP (xanthosine 5'-monophosphate), with the release of PPi. To a lesser extent, also acts on hypoxanthine.</text>
</comment>
<comment type="catalytic activity">
    <reaction evidence="1">
        <text>GMP + diphosphate = guanine + 5-phospho-alpha-D-ribose 1-diphosphate</text>
        <dbReference type="Rhea" id="RHEA:25424"/>
        <dbReference type="ChEBI" id="CHEBI:16235"/>
        <dbReference type="ChEBI" id="CHEBI:33019"/>
        <dbReference type="ChEBI" id="CHEBI:58017"/>
        <dbReference type="ChEBI" id="CHEBI:58115"/>
    </reaction>
    <physiologicalReaction direction="right-to-left" evidence="1">
        <dbReference type="Rhea" id="RHEA:25426"/>
    </physiologicalReaction>
</comment>
<comment type="catalytic activity">
    <reaction evidence="1">
        <text>XMP + diphosphate = xanthine + 5-phospho-alpha-D-ribose 1-diphosphate</text>
        <dbReference type="Rhea" id="RHEA:10800"/>
        <dbReference type="ChEBI" id="CHEBI:17712"/>
        <dbReference type="ChEBI" id="CHEBI:33019"/>
        <dbReference type="ChEBI" id="CHEBI:57464"/>
        <dbReference type="ChEBI" id="CHEBI:58017"/>
        <dbReference type="EC" id="2.4.2.22"/>
    </reaction>
    <physiologicalReaction direction="right-to-left" evidence="1">
        <dbReference type="Rhea" id="RHEA:10802"/>
    </physiologicalReaction>
</comment>
<comment type="catalytic activity">
    <reaction evidence="1">
        <text>IMP + diphosphate = hypoxanthine + 5-phospho-alpha-D-ribose 1-diphosphate</text>
        <dbReference type="Rhea" id="RHEA:17973"/>
        <dbReference type="ChEBI" id="CHEBI:17368"/>
        <dbReference type="ChEBI" id="CHEBI:33019"/>
        <dbReference type="ChEBI" id="CHEBI:58017"/>
        <dbReference type="ChEBI" id="CHEBI:58053"/>
    </reaction>
    <physiologicalReaction direction="right-to-left" evidence="1">
        <dbReference type="Rhea" id="RHEA:17975"/>
    </physiologicalReaction>
</comment>
<comment type="cofactor">
    <cofactor evidence="1">
        <name>Mg(2+)</name>
        <dbReference type="ChEBI" id="CHEBI:18420"/>
    </cofactor>
</comment>
<comment type="pathway">
    <text evidence="1">Purine metabolism; GMP biosynthesis via salvage pathway; GMP from guanine: step 1/1.</text>
</comment>
<comment type="pathway">
    <text evidence="1">Purine metabolism; XMP biosynthesis via salvage pathway; XMP from xanthine: step 1/1.</text>
</comment>
<comment type="subunit">
    <text evidence="1">Homotetramer.</text>
</comment>
<comment type="subcellular location">
    <subcellularLocation>
        <location evidence="1">Cell inner membrane</location>
        <topology evidence="1">Peripheral membrane protein</topology>
    </subcellularLocation>
</comment>
<comment type="similarity">
    <text evidence="1">Belongs to the purine/pyrimidine phosphoribosyltransferase family. XGPT subfamily.</text>
</comment>
<name>XGPT_HISS1</name>
<evidence type="ECO:0000255" key="1">
    <source>
        <dbReference type="HAMAP-Rule" id="MF_01903"/>
    </source>
</evidence>
<keyword id="KW-0997">Cell inner membrane</keyword>
<keyword id="KW-1003">Cell membrane</keyword>
<keyword id="KW-0328">Glycosyltransferase</keyword>
<keyword id="KW-0460">Magnesium</keyword>
<keyword id="KW-0472">Membrane</keyword>
<keyword id="KW-0479">Metal-binding</keyword>
<keyword id="KW-0660">Purine salvage</keyword>
<keyword id="KW-0808">Transferase</keyword>
<accession>Q0I1C0</accession>
<gene>
    <name evidence="1" type="primary">gpt</name>
    <name type="ordered locus">HS_0003</name>
</gene>
<reference key="1">
    <citation type="journal article" date="2007" name="J. Bacteriol.">
        <title>Complete genome sequence of Haemophilus somnus (Histophilus somni) strain 129Pt and comparison to Haemophilus ducreyi 35000HP and Haemophilus influenzae Rd.</title>
        <authorList>
            <person name="Challacombe J.F."/>
            <person name="Duncan A.J."/>
            <person name="Brettin T.S."/>
            <person name="Bruce D."/>
            <person name="Chertkov O."/>
            <person name="Detter J.C."/>
            <person name="Han C.S."/>
            <person name="Misra M."/>
            <person name="Richardson P."/>
            <person name="Tapia R."/>
            <person name="Thayer N."/>
            <person name="Xie G."/>
            <person name="Inzana T.J."/>
        </authorList>
    </citation>
    <scope>NUCLEOTIDE SEQUENCE [LARGE SCALE GENOMIC DNA]</scope>
    <source>
        <strain>129Pt</strain>
    </source>
</reference>
<sequence>MSEKYVVTWDMFQMHTRKLSERLLPATQWKGIIAVSRGGLFPAAVIARELGIRHIETVCISSYDHNQQGNLNVLHAAQVKNGGEGFIVVDDLVDTGNTARAIRELYPNARFVTVFAKPAGANLVDDYVIDIPQNTWIEQPWDMGITFVPPLARK</sequence>
<organism>
    <name type="scientific">Histophilus somni (strain 129Pt)</name>
    <name type="common">Haemophilus somnus</name>
    <dbReference type="NCBI Taxonomy" id="205914"/>
    <lineage>
        <taxon>Bacteria</taxon>
        <taxon>Pseudomonadati</taxon>
        <taxon>Pseudomonadota</taxon>
        <taxon>Gammaproteobacteria</taxon>
        <taxon>Pasteurellales</taxon>
        <taxon>Pasteurellaceae</taxon>
        <taxon>Histophilus</taxon>
    </lineage>
</organism>
<dbReference type="EC" id="2.4.2.-" evidence="1"/>
<dbReference type="EC" id="2.4.2.22" evidence="1"/>
<dbReference type="EMBL" id="CP000436">
    <property type="protein sequence ID" value="ABI24284.1"/>
    <property type="molecule type" value="Genomic_DNA"/>
</dbReference>
<dbReference type="SMR" id="Q0I1C0"/>
<dbReference type="KEGG" id="hso:HS_0003"/>
<dbReference type="eggNOG" id="COG2236">
    <property type="taxonomic scope" value="Bacteria"/>
</dbReference>
<dbReference type="HOGENOM" id="CLU_080904_3_0_6"/>
<dbReference type="UniPathway" id="UPA00602">
    <property type="reaction ID" value="UER00658"/>
</dbReference>
<dbReference type="UniPathway" id="UPA00909">
    <property type="reaction ID" value="UER00887"/>
</dbReference>
<dbReference type="GO" id="GO:0005829">
    <property type="term" value="C:cytosol"/>
    <property type="evidence" value="ECO:0007669"/>
    <property type="project" value="TreeGrafter"/>
</dbReference>
<dbReference type="GO" id="GO:0005886">
    <property type="term" value="C:plasma membrane"/>
    <property type="evidence" value="ECO:0007669"/>
    <property type="project" value="UniProtKB-SubCell"/>
</dbReference>
<dbReference type="GO" id="GO:0052657">
    <property type="term" value="F:guanine phosphoribosyltransferase activity"/>
    <property type="evidence" value="ECO:0007669"/>
    <property type="project" value="RHEA"/>
</dbReference>
<dbReference type="GO" id="GO:0004422">
    <property type="term" value="F:hypoxanthine phosphoribosyltransferase activity"/>
    <property type="evidence" value="ECO:0007669"/>
    <property type="project" value="TreeGrafter"/>
</dbReference>
<dbReference type="GO" id="GO:0000287">
    <property type="term" value="F:magnesium ion binding"/>
    <property type="evidence" value="ECO:0007669"/>
    <property type="project" value="UniProtKB-UniRule"/>
</dbReference>
<dbReference type="GO" id="GO:0000310">
    <property type="term" value="F:xanthine phosphoribosyltransferase activity"/>
    <property type="evidence" value="ECO:0007669"/>
    <property type="project" value="UniProtKB-UniRule"/>
</dbReference>
<dbReference type="GO" id="GO:0032263">
    <property type="term" value="P:GMP salvage"/>
    <property type="evidence" value="ECO:0007669"/>
    <property type="project" value="UniProtKB-UniRule"/>
</dbReference>
<dbReference type="GO" id="GO:0032264">
    <property type="term" value="P:IMP salvage"/>
    <property type="evidence" value="ECO:0007669"/>
    <property type="project" value="TreeGrafter"/>
</dbReference>
<dbReference type="GO" id="GO:0006166">
    <property type="term" value="P:purine ribonucleoside salvage"/>
    <property type="evidence" value="ECO:0007669"/>
    <property type="project" value="UniProtKB-KW"/>
</dbReference>
<dbReference type="GO" id="GO:0032265">
    <property type="term" value="P:XMP salvage"/>
    <property type="evidence" value="ECO:0007669"/>
    <property type="project" value="UniProtKB-UniRule"/>
</dbReference>
<dbReference type="CDD" id="cd06223">
    <property type="entry name" value="PRTases_typeI"/>
    <property type="match status" value="1"/>
</dbReference>
<dbReference type="FunFam" id="3.40.50.2020:FF:000009">
    <property type="entry name" value="Xanthine phosphoribosyltransferase"/>
    <property type="match status" value="1"/>
</dbReference>
<dbReference type="Gene3D" id="3.40.50.2020">
    <property type="match status" value="1"/>
</dbReference>
<dbReference type="HAMAP" id="MF_01903">
    <property type="entry name" value="XGPRT"/>
    <property type="match status" value="1"/>
</dbReference>
<dbReference type="InterPro" id="IPR000836">
    <property type="entry name" value="PRibTrfase_dom"/>
</dbReference>
<dbReference type="InterPro" id="IPR029057">
    <property type="entry name" value="PRTase-like"/>
</dbReference>
<dbReference type="InterPro" id="IPR023747">
    <property type="entry name" value="Xanthine_Guanine_PRibTrfase"/>
</dbReference>
<dbReference type="NCBIfam" id="NF006613">
    <property type="entry name" value="PRK09177.1"/>
    <property type="match status" value="1"/>
</dbReference>
<dbReference type="PANTHER" id="PTHR39563">
    <property type="entry name" value="XANTHINE PHOSPHORIBOSYLTRANSFERASE"/>
    <property type="match status" value="1"/>
</dbReference>
<dbReference type="PANTHER" id="PTHR39563:SF1">
    <property type="entry name" value="XANTHINE-GUANINE PHOSPHORIBOSYLTRANSFERASE"/>
    <property type="match status" value="1"/>
</dbReference>
<dbReference type="Pfam" id="PF00156">
    <property type="entry name" value="Pribosyltran"/>
    <property type="match status" value="1"/>
</dbReference>
<dbReference type="SUPFAM" id="SSF53271">
    <property type="entry name" value="PRTase-like"/>
    <property type="match status" value="1"/>
</dbReference>
<dbReference type="PROSITE" id="PS00103">
    <property type="entry name" value="PUR_PYR_PR_TRANSFER"/>
    <property type="match status" value="1"/>
</dbReference>
<protein>
    <recommendedName>
        <fullName evidence="1">Xanthine-guanine phosphoribosyltransferase</fullName>
        <shortName evidence="1">XGPRT</shortName>
        <ecNumber evidence="1">2.4.2.-</ecNumber>
        <ecNumber evidence="1">2.4.2.22</ecNumber>
    </recommendedName>
    <alternativeName>
        <fullName evidence="1">Xanthine phosphoribosyltransferase</fullName>
    </alternativeName>
</protein>